<gene>
    <name evidence="13 14 17" type="primary">MIOS</name>
</gene>
<name>MIOS_HUMAN</name>
<comment type="function">
    <text evidence="1 2 3 4 5 7 10 11">As a component of the GATOR2 complex, functions as an activator of the amino acid-sensing branch of the mTORC1 signaling pathway (PubMed:23723238, PubMed:26586190, PubMed:27487210, PubMed:35831510, PubMed:36528027). The GATOR2 complex indirectly activates mTORC1 through the inhibition of the GATOR1 subcomplex (PubMed:23723238, PubMed:26586190, PubMed:27487210, PubMed:35831510, PubMed:36528027). GATOR2 probably acts as an E3 ubiquitin-protein ligase toward GATOR1 (PubMed:36528027). In the presence of abundant amino acids, the GATOR2 complex mediates ubiquitination of the NPRL2 core component of the GATOR1 complex, leading to GATOR1 inactivation (PubMed:36528027). In the absence of amino acids, GATOR2 is inhibited, activating the GATOR1 complex (PubMed:25263562, PubMed:25457612, PubMed:26586190, PubMed:27487210). Within the GATOR2 complex, MIOS is required to prevent autoubiquitination of WDR24, the catalytic subunit of the complex (PubMed:35831510). The GATOR2 complex is required for brain myelination (By similarity).</text>
</comment>
<comment type="activity regulation">
    <text evidence="3 5 6 7 10">The GATOR2 complex is negatively regulated by the upstream amino acid sensors CASTOR1 and SESN2, which sequester the GATOR2 complex in absence of amino acids (PubMed:25263562, PubMed:26586190, PubMed:26972053, PubMed:27487210, PubMed:35831510). In the presence of abundant amino acids, GATOR2 is released from CASTOR1 and SESN2 and activated (PubMed:25263562, PubMed:26586190, PubMed:26972053, PubMed:27487210, PubMed:35831510).</text>
</comment>
<comment type="subunit">
    <text evidence="2 3 4 5 6 9 10 11">Component of the GATOR2 subcomplex, composed of MIOS, SEC13, SEH1L, WDR24 and WDR59 (PubMed:23723238, PubMed:35831510, PubMed:36528027). The GATOR2 complex interacts with CASTOR1 and CASTOR2; the interaction is negatively regulated by arginine (PubMed:26972053). CASTOR1 and CASTOR2 convey leucine availability via direct interaction with MIOS (PubMed:35831510). The GATOR2 complex interacts with SESN1, SESN2 and SESN3; the interaction is negatively regulated by amino acids (PubMed:25263562, PubMed:25457612, PubMed:26586190). Interacts with SAR1A and SAR1B; the interaction is direct, disrupted by leucine and mediates the interaction of SAR1A or SAR1B with the GATOR2 complex to negatively regulate the TORC1 signaling upon leucine deprivation (PubMed:34290409).</text>
</comment>
<comment type="interaction">
    <interactant intactId="EBI-2515122">
        <id>Q9NXC5</id>
    </interactant>
    <interactant intactId="EBI-10276168">
        <id>Q8WTX7</id>
        <label>CASTOR1</label>
    </interactant>
    <organismsDiffer>false</organismsDiffer>
    <experiments>7</experiments>
</comment>
<comment type="interaction">
    <interactant intactId="EBI-2515122">
        <id>Q9NXC5</id>
    </interactant>
    <interactant intactId="EBI-11102839">
        <id>A6NHX0</id>
        <label>CASTOR2</label>
    </interactant>
    <organismsDiffer>false</organismsDiffer>
    <experiments>2</experiments>
</comment>
<comment type="interaction">
    <interactant intactId="EBI-2515122">
        <id>Q9NXC5</id>
    </interactant>
    <interactant intactId="EBI-3939642">
        <id>P58004</id>
        <label>SESN2</label>
    </interactant>
    <organismsDiffer>false</organismsDiffer>
    <experiments>5</experiments>
</comment>
<comment type="interaction">
    <interactant intactId="EBI-2515122">
        <id>Q9NXC5</id>
    </interactant>
    <interactant intactId="EBI-746424">
        <id>Q96S15</id>
        <label>WDR24</label>
    </interactant>
    <organismsDiffer>false</organismsDiffer>
    <experiments>18</experiments>
</comment>
<comment type="subcellular location">
    <subcellularLocation>
        <location evidence="8">Lysosome membrane</location>
    </subcellularLocation>
</comment>
<comment type="alternative products">
    <event type="alternative splicing"/>
    <isoform>
        <id>Q9NXC5-1</id>
        <name>1</name>
        <sequence type="displayed"/>
    </isoform>
    <isoform>
        <id>Q9NXC5-2</id>
        <name>2</name>
        <sequence type="described" ref="VSP_032979 VSP_032980"/>
    </isoform>
</comment>
<comment type="similarity">
    <text evidence="15">Belongs to the WD repeat mio family.</text>
</comment>
<comment type="caution">
    <text evidence="10 11">The E3 ubiquitin-protein ligase activity of the GATOR2 complex is subject to discussion (PubMed:35831510, PubMed:36528027). According to a report, the GATOR2 complex does not catalyze ubiquitination of the GATOR1 complex (PubMed:35831510). In contrast, another publication showed that the GATOR2 complex mediates ubiquitination of the NPRL2 core component of the GATOR1 complex, leading to GATOR1 inactivation (PubMed:36528027).</text>
</comment>
<proteinExistence type="evidence at protein level"/>
<feature type="chain" id="PRO_0000329404" description="GATOR2 complex protein MIOS">
    <location>
        <begin position="1"/>
        <end position="875"/>
    </location>
</feature>
<feature type="repeat" description="WD 1">
    <location>
        <begin position="58"/>
        <end position="100"/>
    </location>
</feature>
<feature type="repeat" description="WD 2">
    <location>
        <begin position="111"/>
        <end position="155"/>
    </location>
</feature>
<feature type="repeat" description="WD 3">
    <location>
        <begin position="182"/>
        <end position="221"/>
    </location>
</feature>
<feature type="repeat" description="WD 4">
    <location>
        <begin position="223"/>
        <end position="261"/>
    </location>
</feature>
<feature type="repeat" description="WD 5">
    <location>
        <begin position="265"/>
        <end position="306"/>
    </location>
</feature>
<feature type="repeat" description="WD 6">
    <location>
        <begin position="395"/>
        <end position="437"/>
    </location>
</feature>
<feature type="zinc finger region" description="C4-type" evidence="16">
    <location>
        <begin position="735"/>
        <end position="781"/>
    </location>
</feature>
<feature type="zinc finger region" description="RING-type; atypical" evidence="16">
    <location>
        <begin position="782"/>
        <end position="863"/>
    </location>
</feature>
<feature type="binding site" evidence="10 18">
    <location>
        <position position="737"/>
    </location>
    <ligand>
        <name>Zn(2+)</name>
        <dbReference type="ChEBI" id="CHEBI:29105"/>
        <label>1</label>
    </ligand>
</feature>
<feature type="binding site" evidence="10 18">
    <location>
        <position position="740"/>
    </location>
    <ligand>
        <name>Zn(2+)</name>
        <dbReference type="ChEBI" id="CHEBI:29105"/>
        <label>1</label>
    </ligand>
</feature>
<feature type="binding site" evidence="10 18">
    <location>
        <position position="775"/>
    </location>
    <ligand>
        <name>Zn(2+)</name>
        <dbReference type="ChEBI" id="CHEBI:29105"/>
        <label>1</label>
    </ligand>
</feature>
<feature type="binding site" evidence="10 18">
    <location>
        <position position="778"/>
    </location>
    <ligand>
        <name>Zn(2+)</name>
        <dbReference type="ChEBI" id="CHEBI:29105"/>
        <label>1</label>
    </ligand>
</feature>
<feature type="binding site" evidence="10 18">
    <location>
        <position position="788"/>
    </location>
    <ligand>
        <name>Zn(2+)</name>
        <dbReference type="ChEBI" id="CHEBI:29105"/>
        <label>2</label>
    </ligand>
</feature>
<feature type="binding site" evidence="10 18">
    <location>
        <position position="827"/>
    </location>
    <ligand>
        <name>Zn(2+)</name>
        <dbReference type="ChEBI" id="CHEBI:29105"/>
        <label>3</label>
    </ligand>
</feature>
<feature type="binding site" evidence="10 18">
    <location>
        <position position="830"/>
    </location>
    <ligand>
        <name>Zn(2+)</name>
        <dbReference type="ChEBI" id="CHEBI:29105"/>
        <label>3</label>
    </ligand>
</feature>
<feature type="binding site" evidence="10 18">
    <location>
        <position position="830"/>
    </location>
    <ligand>
        <name>Zn(2+)</name>
        <dbReference type="ChEBI" id="CHEBI:29105"/>
        <label>4</label>
    </ligand>
</feature>
<feature type="binding site" evidence="10 18">
    <location>
        <position position="832"/>
    </location>
    <ligand>
        <name>Zn(2+)</name>
        <dbReference type="ChEBI" id="CHEBI:29105"/>
        <label>4</label>
    </ligand>
</feature>
<feature type="binding site" evidence="10 18">
    <location>
        <position position="835"/>
    </location>
    <ligand>
        <name>Zn(2+)</name>
        <dbReference type="ChEBI" id="CHEBI:29105"/>
        <label>2</label>
    </ligand>
</feature>
<feature type="binding site" evidence="10 18">
    <location>
        <position position="838"/>
    </location>
    <ligand>
        <name>Zn(2+)</name>
        <dbReference type="ChEBI" id="CHEBI:29105"/>
        <label>2</label>
    </ligand>
</feature>
<feature type="binding site" evidence="10 18">
    <location>
        <position position="849"/>
    </location>
    <ligand>
        <name>Zn(2+)</name>
        <dbReference type="ChEBI" id="CHEBI:29105"/>
        <label>4</label>
    </ligand>
</feature>
<feature type="binding site" evidence="10 18">
    <location>
        <position position="854"/>
    </location>
    <ligand>
        <name>Zn(2+)</name>
        <dbReference type="ChEBI" id="CHEBI:29105"/>
        <label>4</label>
    </ligand>
</feature>
<feature type="binding site" evidence="10 18">
    <location>
        <position position="858"/>
    </location>
    <ligand>
        <name>Zn(2+)</name>
        <dbReference type="ChEBI" id="CHEBI:29105"/>
        <label>3</label>
    </ligand>
</feature>
<feature type="modified residue" description="Phosphoserine" evidence="23">
    <location>
        <position position="759"/>
    </location>
</feature>
<feature type="modified residue" description="Phosphoserine" evidence="19 20 21 22 23">
    <location>
        <position position="766"/>
    </location>
</feature>
<feature type="splice variant" id="VSP_032979" description="In isoform 2." evidence="12">
    <original>DLNLNVVAMALSGYTDE</original>
    <variation>RRSESQCGSNGFIGLYG</variation>
    <location>
        <begin position="551"/>
        <end position="567"/>
    </location>
</feature>
<feature type="splice variant" id="VSP_032980" description="In isoform 2." evidence="12">
    <location>
        <begin position="568"/>
        <end position="875"/>
    </location>
</feature>
<feature type="mutagenesis site" description="Impaired assembly of the GATOR2 complex." evidence="10">
    <original>A</original>
    <variation>E</variation>
    <location>
        <position position="560"/>
    </location>
</feature>
<feature type="mutagenesis site" description="Impaired amino-acid-mediated mTORC1 activation." evidence="11">
    <original>CALC</original>
    <variation>AALA</variation>
    <location>
        <begin position="785"/>
        <end position="788"/>
    </location>
</feature>
<organism>
    <name type="scientific">Homo sapiens</name>
    <name type="common">Human</name>
    <dbReference type="NCBI Taxonomy" id="9606"/>
    <lineage>
        <taxon>Eukaryota</taxon>
        <taxon>Metazoa</taxon>
        <taxon>Chordata</taxon>
        <taxon>Craniata</taxon>
        <taxon>Vertebrata</taxon>
        <taxon>Euteleostomi</taxon>
        <taxon>Mammalia</taxon>
        <taxon>Eutheria</taxon>
        <taxon>Euarchontoglires</taxon>
        <taxon>Primates</taxon>
        <taxon>Haplorrhini</taxon>
        <taxon>Catarrhini</taxon>
        <taxon>Hominidae</taxon>
        <taxon>Homo</taxon>
    </lineage>
</organism>
<dbReference type="EMBL" id="AK000330">
    <property type="protein sequence ID" value="BAA91090.1"/>
    <property type="molecule type" value="mRNA"/>
</dbReference>
<dbReference type="EMBL" id="AC004982">
    <property type="protein sequence ID" value="AAC31788.1"/>
    <property type="status" value="ALT_SEQ"/>
    <property type="molecule type" value="Genomic_DNA"/>
</dbReference>
<dbReference type="EMBL" id="CH471073">
    <property type="protein sequence ID" value="EAW93598.1"/>
    <property type="molecule type" value="Genomic_DNA"/>
</dbReference>
<dbReference type="EMBL" id="CH471073">
    <property type="protein sequence ID" value="EAW93601.1"/>
    <property type="molecule type" value="Genomic_DNA"/>
</dbReference>
<dbReference type="EMBL" id="BC005883">
    <property type="protein sequence ID" value="AAH05883.2"/>
    <property type="molecule type" value="mRNA"/>
</dbReference>
<dbReference type="EMBL" id="BC140833">
    <property type="protein sequence ID" value="AAI40834.1"/>
    <property type="molecule type" value="mRNA"/>
</dbReference>
<dbReference type="EMBL" id="BC140834">
    <property type="protein sequence ID" value="AAI40835.1"/>
    <property type="molecule type" value="mRNA"/>
</dbReference>
<dbReference type="EMBL" id="AL136892">
    <property type="protein sequence ID" value="CAB66826.2"/>
    <property type="molecule type" value="mRNA"/>
</dbReference>
<dbReference type="CCDS" id="CCDS43554.1">
    <molecule id="Q9NXC5-1"/>
</dbReference>
<dbReference type="RefSeq" id="NP_001357005.1">
    <molecule id="Q9NXC5-1"/>
    <property type="nucleotide sequence ID" value="NM_001370076.1"/>
</dbReference>
<dbReference type="RefSeq" id="NP_001357006.1">
    <molecule id="Q9NXC5-1"/>
    <property type="nucleotide sequence ID" value="NM_001370077.1"/>
</dbReference>
<dbReference type="RefSeq" id="NP_001357009.1">
    <molecule id="Q9NXC5-1"/>
    <property type="nucleotide sequence ID" value="NM_001370080.1"/>
</dbReference>
<dbReference type="RefSeq" id="NP_061878.3">
    <molecule id="Q9NXC5-1"/>
    <property type="nucleotide sequence ID" value="NM_019005.3"/>
</dbReference>
<dbReference type="RefSeq" id="XP_005249837.1">
    <property type="nucleotide sequence ID" value="XM_005249780.3"/>
</dbReference>
<dbReference type="RefSeq" id="XP_005249838.1">
    <property type="nucleotide sequence ID" value="XM_005249781.3"/>
</dbReference>
<dbReference type="RefSeq" id="XP_005249839.1">
    <property type="nucleotide sequence ID" value="XM_005249782.3"/>
</dbReference>
<dbReference type="RefSeq" id="XP_016867850.1">
    <property type="nucleotide sequence ID" value="XM_017012361.1"/>
</dbReference>
<dbReference type="RefSeq" id="XP_047276463.1">
    <molecule id="Q9NXC5-1"/>
    <property type="nucleotide sequence ID" value="XM_047420507.1"/>
</dbReference>
<dbReference type="RefSeq" id="XP_047276464.1">
    <molecule id="Q9NXC5-1"/>
    <property type="nucleotide sequence ID" value="XM_047420508.1"/>
</dbReference>
<dbReference type="RefSeq" id="XP_047276465.1">
    <molecule id="Q9NXC5-1"/>
    <property type="nucleotide sequence ID" value="XM_047420509.1"/>
</dbReference>
<dbReference type="RefSeq" id="XP_047276466.1">
    <molecule id="Q9NXC5-1"/>
    <property type="nucleotide sequence ID" value="XM_047420510.1"/>
</dbReference>
<dbReference type="RefSeq" id="XP_047276467.1">
    <molecule id="Q9NXC5-1"/>
    <property type="nucleotide sequence ID" value="XM_047420511.1"/>
</dbReference>
<dbReference type="RefSeq" id="XP_047276468.1">
    <molecule id="Q9NXC5-1"/>
    <property type="nucleotide sequence ID" value="XM_047420512.1"/>
</dbReference>
<dbReference type="RefSeq" id="XP_054214452.1">
    <molecule id="Q9NXC5-1"/>
    <property type="nucleotide sequence ID" value="XM_054358477.1"/>
</dbReference>
<dbReference type="RefSeq" id="XP_054214453.1">
    <molecule id="Q9NXC5-1"/>
    <property type="nucleotide sequence ID" value="XM_054358478.1"/>
</dbReference>
<dbReference type="RefSeq" id="XP_054214454.1">
    <molecule id="Q9NXC5-1"/>
    <property type="nucleotide sequence ID" value="XM_054358479.1"/>
</dbReference>
<dbReference type="RefSeq" id="XP_054214455.1">
    <molecule id="Q9NXC5-1"/>
    <property type="nucleotide sequence ID" value="XM_054358480.1"/>
</dbReference>
<dbReference type="PDB" id="7UHY">
    <property type="method" value="EM"/>
    <property type="resolution" value="3.66 A"/>
    <property type="chains" value="A/B=1-875"/>
</dbReference>
<dbReference type="PDBsum" id="7UHY"/>
<dbReference type="EMDB" id="EMD-26519"/>
<dbReference type="SMR" id="Q9NXC5"/>
<dbReference type="BioGRID" id="119974">
    <property type="interactions" value="73"/>
</dbReference>
<dbReference type="ComplexPortal" id="CPX-6227">
    <property type="entry name" value="GATOR2 complex"/>
</dbReference>
<dbReference type="CORUM" id="Q9NXC5"/>
<dbReference type="DIP" id="DIP-53801N"/>
<dbReference type="FunCoup" id="Q9NXC5">
    <property type="interactions" value="2680"/>
</dbReference>
<dbReference type="IntAct" id="Q9NXC5">
    <property type="interactions" value="44"/>
</dbReference>
<dbReference type="MINT" id="Q9NXC5"/>
<dbReference type="STRING" id="9606.ENSP00000339881"/>
<dbReference type="GlyGen" id="Q9NXC5">
    <property type="glycosylation" value="1 site, 1 O-linked glycan (1 site)"/>
</dbReference>
<dbReference type="iPTMnet" id="Q9NXC5"/>
<dbReference type="PhosphoSitePlus" id="Q9NXC5"/>
<dbReference type="SwissPalm" id="Q9NXC5"/>
<dbReference type="BioMuta" id="MIOS"/>
<dbReference type="DMDM" id="182662411"/>
<dbReference type="jPOST" id="Q9NXC5"/>
<dbReference type="MassIVE" id="Q9NXC5"/>
<dbReference type="PaxDb" id="9606-ENSP00000339881"/>
<dbReference type="PeptideAtlas" id="Q9NXC5"/>
<dbReference type="ProteomicsDB" id="83074">
    <molecule id="Q9NXC5-1"/>
</dbReference>
<dbReference type="ProteomicsDB" id="83075">
    <molecule id="Q9NXC5-2"/>
</dbReference>
<dbReference type="Pumba" id="Q9NXC5"/>
<dbReference type="Antibodypedia" id="50650">
    <property type="antibodies" value="31 antibodies from 16 providers"/>
</dbReference>
<dbReference type="DNASU" id="54468"/>
<dbReference type="Ensembl" id="ENST00000340080.9">
    <molecule id="Q9NXC5-1"/>
    <property type="protein sequence ID" value="ENSP00000339881.4"/>
    <property type="gene ID" value="ENSG00000164654.16"/>
</dbReference>
<dbReference type="Ensembl" id="ENST00000405785.5">
    <molecule id="Q9NXC5-1"/>
    <property type="protein sequence ID" value="ENSP00000384088.1"/>
    <property type="gene ID" value="ENSG00000164654.16"/>
</dbReference>
<dbReference type="GeneID" id="54468"/>
<dbReference type="KEGG" id="hsa:54468"/>
<dbReference type="MANE-Select" id="ENST00000340080.9">
    <property type="protein sequence ID" value="ENSP00000339881.4"/>
    <property type="RefSeq nucleotide sequence ID" value="NM_019005.4"/>
    <property type="RefSeq protein sequence ID" value="NP_061878.3"/>
</dbReference>
<dbReference type="UCSC" id="uc003srf.4">
    <molecule id="Q9NXC5-1"/>
    <property type="organism name" value="human"/>
</dbReference>
<dbReference type="AGR" id="HGNC:21905"/>
<dbReference type="CTD" id="54468"/>
<dbReference type="DisGeNET" id="54468"/>
<dbReference type="GeneCards" id="MIOS"/>
<dbReference type="HGNC" id="HGNC:21905">
    <property type="gene designation" value="MIOS"/>
</dbReference>
<dbReference type="HPA" id="ENSG00000164654">
    <property type="expression patterns" value="Tissue enhanced (skeletal)"/>
</dbReference>
<dbReference type="MIM" id="615359">
    <property type="type" value="gene"/>
</dbReference>
<dbReference type="neXtProt" id="NX_Q9NXC5"/>
<dbReference type="OpenTargets" id="ENSG00000164654"/>
<dbReference type="PharmGKB" id="PA164722300"/>
<dbReference type="VEuPathDB" id="HostDB:ENSG00000164654"/>
<dbReference type="eggNOG" id="KOG1008">
    <property type="taxonomic scope" value="Eukaryota"/>
</dbReference>
<dbReference type="GeneTree" id="ENSGT00390000015038"/>
<dbReference type="HOGENOM" id="CLU_005843_1_0_1"/>
<dbReference type="InParanoid" id="Q9NXC5"/>
<dbReference type="OMA" id="YWIASYL"/>
<dbReference type="OrthoDB" id="341486at2759"/>
<dbReference type="PAN-GO" id="Q9NXC5">
    <property type="GO annotations" value="3 GO annotations based on evolutionary models"/>
</dbReference>
<dbReference type="PhylomeDB" id="Q9NXC5"/>
<dbReference type="TreeFam" id="TF324074"/>
<dbReference type="PathwayCommons" id="Q9NXC5"/>
<dbReference type="Reactome" id="R-HSA-9639288">
    <property type="pathway name" value="Amino acids regulate mTORC1"/>
</dbReference>
<dbReference type="SignaLink" id="Q9NXC5"/>
<dbReference type="SIGNOR" id="Q9NXC5"/>
<dbReference type="BioGRID-ORCS" id="54468">
    <property type="hits" value="318 hits in 1157 CRISPR screens"/>
</dbReference>
<dbReference type="GenomeRNAi" id="54468"/>
<dbReference type="Pharos" id="Q9NXC5">
    <property type="development level" value="Tdark"/>
</dbReference>
<dbReference type="PRO" id="PR:Q9NXC5"/>
<dbReference type="Proteomes" id="UP000005640">
    <property type="component" value="Chromosome 7"/>
</dbReference>
<dbReference type="RNAct" id="Q9NXC5">
    <property type="molecule type" value="protein"/>
</dbReference>
<dbReference type="Bgee" id="ENSG00000164654">
    <property type="expression patterns" value="Expressed in tongue squamous epithelium and 210 other cell types or tissues"/>
</dbReference>
<dbReference type="ExpressionAtlas" id="Q9NXC5">
    <property type="expression patterns" value="baseline and differential"/>
</dbReference>
<dbReference type="GO" id="GO:0030054">
    <property type="term" value="C:cell junction"/>
    <property type="evidence" value="ECO:0000314"/>
    <property type="project" value="HPA"/>
</dbReference>
<dbReference type="GO" id="GO:0005737">
    <property type="term" value="C:cytoplasm"/>
    <property type="evidence" value="ECO:0000318"/>
    <property type="project" value="GO_Central"/>
</dbReference>
<dbReference type="GO" id="GO:0005829">
    <property type="term" value="C:cytosol"/>
    <property type="evidence" value="ECO:0000314"/>
    <property type="project" value="HPA"/>
</dbReference>
<dbReference type="GO" id="GO:0061700">
    <property type="term" value="C:GATOR2 complex"/>
    <property type="evidence" value="ECO:0000314"/>
    <property type="project" value="UniProtKB"/>
</dbReference>
<dbReference type="GO" id="GO:0005765">
    <property type="term" value="C:lysosomal membrane"/>
    <property type="evidence" value="ECO:0000314"/>
    <property type="project" value="UniProtKB"/>
</dbReference>
<dbReference type="GO" id="GO:0005654">
    <property type="term" value="C:nucleoplasm"/>
    <property type="evidence" value="ECO:0000314"/>
    <property type="project" value="HPA"/>
</dbReference>
<dbReference type="GO" id="GO:0008270">
    <property type="term" value="F:zinc ion binding"/>
    <property type="evidence" value="ECO:0007669"/>
    <property type="project" value="UniProtKB-KW"/>
</dbReference>
<dbReference type="GO" id="GO:0034198">
    <property type="term" value="P:cellular response to amino acid starvation"/>
    <property type="evidence" value="ECO:0000315"/>
    <property type="project" value="UniProtKB"/>
</dbReference>
<dbReference type="GO" id="GO:0031669">
    <property type="term" value="P:cellular response to nutrient levels"/>
    <property type="evidence" value="ECO:0000314"/>
    <property type="project" value="UniProtKB"/>
</dbReference>
<dbReference type="GO" id="GO:0032289">
    <property type="term" value="P:central nervous system myelin formation"/>
    <property type="evidence" value="ECO:0007669"/>
    <property type="project" value="Ensembl"/>
</dbReference>
<dbReference type="GO" id="GO:1904262">
    <property type="term" value="P:negative regulation of TORC1 signaling"/>
    <property type="evidence" value="ECO:0000303"/>
    <property type="project" value="ComplexPortal"/>
</dbReference>
<dbReference type="GO" id="GO:0048709">
    <property type="term" value="P:oligodendrocyte differentiation"/>
    <property type="evidence" value="ECO:0000250"/>
    <property type="project" value="UniProtKB"/>
</dbReference>
<dbReference type="GO" id="GO:0070444">
    <property type="term" value="P:oligodendrocyte progenitor proliferation"/>
    <property type="evidence" value="ECO:0000250"/>
    <property type="project" value="UniProtKB"/>
</dbReference>
<dbReference type="GO" id="GO:1904263">
    <property type="term" value="P:positive regulation of TORC1 signaling"/>
    <property type="evidence" value="ECO:0000314"/>
    <property type="project" value="UniProtKB"/>
</dbReference>
<dbReference type="GO" id="GO:0031503">
    <property type="term" value="P:protein-containing complex localization"/>
    <property type="evidence" value="ECO:0000315"/>
    <property type="project" value="UniProtKB"/>
</dbReference>
<dbReference type="CDD" id="cd16691">
    <property type="entry name" value="mRING-H2-C3H3C2_Mio"/>
    <property type="match status" value="1"/>
</dbReference>
<dbReference type="FunFam" id="2.130.10.10:FF:000103">
    <property type="entry name" value="Meiosis regulator for oocyte development"/>
    <property type="match status" value="1"/>
</dbReference>
<dbReference type="Gene3D" id="2.130.10.10">
    <property type="entry name" value="YVTN repeat-like/Quinoprotein amine dehydrogenase"/>
    <property type="match status" value="1"/>
</dbReference>
<dbReference type="InterPro" id="IPR037593">
    <property type="entry name" value="MIOS/Sea4"/>
</dbReference>
<dbReference type="InterPro" id="IPR049092">
    <property type="entry name" value="MIOS_a-sol"/>
</dbReference>
<dbReference type="InterPro" id="IPR015943">
    <property type="entry name" value="WD40/YVTN_repeat-like_dom_sf"/>
</dbReference>
<dbReference type="InterPro" id="IPR036322">
    <property type="entry name" value="WD40_repeat_dom_sf"/>
</dbReference>
<dbReference type="InterPro" id="IPR001680">
    <property type="entry name" value="WD40_rpt"/>
</dbReference>
<dbReference type="InterPro" id="IPR031488">
    <property type="entry name" value="Zn_ribbon_mio"/>
</dbReference>
<dbReference type="PANTHER" id="PTHR16453:SF9">
    <property type="entry name" value="GATOR COMPLEX PROTEIN MIOS"/>
    <property type="match status" value="1"/>
</dbReference>
<dbReference type="PANTHER" id="PTHR16453">
    <property type="entry name" value="WD40 DOMAIN-CONTAINING PROTEIN MIO FAMILY MEMBER"/>
    <property type="match status" value="1"/>
</dbReference>
<dbReference type="Pfam" id="PF21719">
    <property type="entry name" value="MIOS_a-sol"/>
    <property type="match status" value="1"/>
</dbReference>
<dbReference type="Pfam" id="PF21720">
    <property type="entry name" value="MIOS_WD40"/>
    <property type="match status" value="1"/>
</dbReference>
<dbReference type="Pfam" id="PF17034">
    <property type="entry name" value="zinc_ribbon_16"/>
    <property type="match status" value="1"/>
</dbReference>
<dbReference type="SMART" id="SM00320">
    <property type="entry name" value="WD40"/>
    <property type="match status" value="4"/>
</dbReference>
<dbReference type="SUPFAM" id="SSF50978">
    <property type="entry name" value="WD40 repeat-like"/>
    <property type="match status" value="1"/>
</dbReference>
<evidence type="ECO:0000250" key="1">
    <source>
        <dbReference type="UniProtKB" id="Q8VE19"/>
    </source>
</evidence>
<evidence type="ECO:0000269" key="2">
    <source>
    </source>
</evidence>
<evidence type="ECO:0000269" key="3">
    <source>
    </source>
</evidence>
<evidence type="ECO:0000269" key="4">
    <source>
    </source>
</evidence>
<evidence type="ECO:0000269" key="5">
    <source>
    </source>
</evidence>
<evidence type="ECO:0000269" key="6">
    <source>
    </source>
</evidence>
<evidence type="ECO:0000269" key="7">
    <source>
    </source>
</evidence>
<evidence type="ECO:0000269" key="8">
    <source>
    </source>
</evidence>
<evidence type="ECO:0000269" key="9">
    <source>
    </source>
</evidence>
<evidence type="ECO:0000269" key="10">
    <source>
    </source>
</evidence>
<evidence type="ECO:0000269" key="11">
    <source>
    </source>
</evidence>
<evidence type="ECO:0000303" key="12">
    <source>
    </source>
</evidence>
<evidence type="ECO:0000303" key="13">
    <source>
    </source>
</evidence>
<evidence type="ECO:0000303" key="14">
    <source>
    </source>
</evidence>
<evidence type="ECO:0000305" key="15"/>
<evidence type="ECO:0000305" key="16">
    <source>
    </source>
</evidence>
<evidence type="ECO:0000312" key="17">
    <source>
        <dbReference type="HGNC" id="HGNC:21905"/>
    </source>
</evidence>
<evidence type="ECO:0007744" key="18">
    <source>
        <dbReference type="PDB" id="7UHY"/>
    </source>
</evidence>
<evidence type="ECO:0007744" key="19">
    <source>
    </source>
</evidence>
<evidence type="ECO:0007744" key="20">
    <source>
    </source>
</evidence>
<evidence type="ECO:0007744" key="21">
    <source>
    </source>
</evidence>
<evidence type="ECO:0007744" key="22">
    <source>
    </source>
</evidence>
<evidence type="ECO:0007744" key="23">
    <source>
    </source>
</evidence>
<protein>
    <recommendedName>
        <fullName evidence="15">GATOR2 complex protein MIOS</fullName>
    </recommendedName>
    <alternativeName>
        <fullName evidence="17">Missing oocyte meiosis regulator homolog</fullName>
    </alternativeName>
</protein>
<accession>Q9NXC5</accession>
<accession>B2RTV6</accession>
<accession>O75216</accession>
<accession>Q7L551</accession>
<accession>Q9H092</accession>
<reference key="1">
    <citation type="journal article" date="2004" name="Nat. Genet.">
        <title>Complete sequencing and characterization of 21,243 full-length human cDNAs.</title>
        <authorList>
            <person name="Ota T."/>
            <person name="Suzuki Y."/>
            <person name="Nishikawa T."/>
            <person name="Otsuki T."/>
            <person name="Sugiyama T."/>
            <person name="Irie R."/>
            <person name="Wakamatsu A."/>
            <person name="Hayashi K."/>
            <person name="Sato H."/>
            <person name="Nagai K."/>
            <person name="Kimura K."/>
            <person name="Makita H."/>
            <person name="Sekine M."/>
            <person name="Obayashi M."/>
            <person name="Nishi T."/>
            <person name="Shibahara T."/>
            <person name="Tanaka T."/>
            <person name="Ishii S."/>
            <person name="Yamamoto J."/>
            <person name="Saito K."/>
            <person name="Kawai Y."/>
            <person name="Isono Y."/>
            <person name="Nakamura Y."/>
            <person name="Nagahari K."/>
            <person name="Murakami K."/>
            <person name="Yasuda T."/>
            <person name="Iwayanagi T."/>
            <person name="Wagatsuma M."/>
            <person name="Shiratori A."/>
            <person name="Sudo H."/>
            <person name="Hosoiri T."/>
            <person name="Kaku Y."/>
            <person name="Kodaira H."/>
            <person name="Kondo H."/>
            <person name="Sugawara M."/>
            <person name="Takahashi M."/>
            <person name="Kanda K."/>
            <person name="Yokoi T."/>
            <person name="Furuya T."/>
            <person name="Kikkawa E."/>
            <person name="Omura Y."/>
            <person name="Abe K."/>
            <person name="Kamihara K."/>
            <person name="Katsuta N."/>
            <person name="Sato K."/>
            <person name="Tanikawa M."/>
            <person name="Yamazaki M."/>
            <person name="Ninomiya K."/>
            <person name="Ishibashi T."/>
            <person name="Yamashita H."/>
            <person name="Murakawa K."/>
            <person name="Fujimori K."/>
            <person name="Tanai H."/>
            <person name="Kimata M."/>
            <person name="Watanabe M."/>
            <person name="Hiraoka S."/>
            <person name="Chiba Y."/>
            <person name="Ishida S."/>
            <person name="Ono Y."/>
            <person name="Takiguchi S."/>
            <person name="Watanabe S."/>
            <person name="Yosida M."/>
            <person name="Hotuta T."/>
            <person name="Kusano J."/>
            <person name="Kanehori K."/>
            <person name="Takahashi-Fujii A."/>
            <person name="Hara H."/>
            <person name="Tanase T.-O."/>
            <person name="Nomura Y."/>
            <person name="Togiya S."/>
            <person name="Komai F."/>
            <person name="Hara R."/>
            <person name="Takeuchi K."/>
            <person name="Arita M."/>
            <person name="Imose N."/>
            <person name="Musashino K."/>
            <person name="Yuuki H."/>
            <person name="Oshima A."/>
            <person name="Sasaki N."/>
            <person name="Aotsuka S."/>
            <person name="Yoshikawa Y."/>
            <person name="Matsunawa H."/>
            <person name="Ichihara T."/>
            <person name="Shiohata N."/>
            <person name="Sano S."/>
            <person name="Moriya S."/>
            <person name="Momiyama H."/>
            <person name="Satoh N."/>
            <person name="Takami S."/>
            <person name="Terashima Y."/>
            <person name="Suzuki O."/>
            <person name="Nakagawa S."/>
            <person name="Senoh A."/>
            <person name="Mizoguchi H."/>
            <person name="Goto Y."/>
            <person name="Shimizu F."/>
            <person name="Wakebe H."/>
            <person name="Hishigaki H."/>
            <person name="Watanabe T."/>
            <person name="Sugiyama A."/>
            <person name="Takemoto M."/>
            <person name="Kawakami B."/>
            <person name="Yamazaki M."/>
            <person name="Watanabe K."/>
            <person name="Kumagai A."/>
            <person name="Itakura S."/>
            <person name="Fukuzumi Y."/>
            <person name="Fujimori Y."/>
            <person name="Komiyama M."/>
            <person name="Tashiro H."/>
            <person name="Tanigami A."/>
            <person name="Fujiwara T."/>
            <person name="Ono T."/>
            <person name="Yamada K."/>
            <person name="Fujii Y."/>
            <person name="Ozaki K."/>
            <person name="Hirao M."/>
            <person name="Ohmori Y."/>
            <person name="Kawabata A."/>
            <person name="Hikiji T."/>
            <person name="Kobatake N."/>
            <person name="Inagaki H."/>
            <person name="Ikema Y."/>
            <person name="Okamoto S."/>
            <person name="Okitani R."/>
            <person name="Kawakami T."/>
            <person name="Noguchi S."/>
            <person name="Itoh T."/>
            <person name="Shigeta K."/>
            <person name="Senba T."/>
            <person name="Matsumura K."/>
            <person name="Nakajima Y."/>
            <person name="Mizuno T."/>
            <person name="Morinaga M."/>
            <person name="Sasaki M."/>
            <person name="Togashi T."/>
            <person name="Oyama M."/>
            <person name="Hata H."/>
            <person name="Watanabe M."/>
            <person name="Komatsu T."/>
            <person name="Mizushima-Sugano J."/>
            <person name="Satoh T."/>
            <person name="Shirai Y."/>
            <person name="Takahashi Y."/>
            <person name="Nakagawa K."/>
            <person name="Okumura K."/>
            <person name="Nagase T."/>
            <person name="Nomura N."/>
            <person name="Kikuchi H."/>
            <person name="Masuho Y."/>
            <person name="Yamashita R."/>
            <person name="Nakai K."/>
            <person name="Yada T."/>
            <person name="Nakamura Y."/>
            <person name="Ohara O."/>
            <person name="Isogai T."/>
            <person name="Sugano S."/>
        </authorList>
    </citation>
    <scope>NUCLEOTIDE SEQUENCE [LARGE SCALE MRNA] (ISOFORM 2)</scope>
    <source>
        <tissue>Hepatoma</tissue>
    </source>
</reference>
<reference key="2">
    <citation type="journal article" date="2003" name="Nature">
        <title>The DNA sequence of human chromosome 7.</title>
        <authorList>
            <person name="Hillier L.W."/>
            <person name="Fulton R.S."/>
            <person name="Fulton L.A."/>
            <person name="Graves T.A."/>
            <person name="Pepin K.H."/>
            <person name="Wagner-McPherson C."/>
            <person name="Layman D."/>
            <person name="Maas J."/>
            <person name="Jaeger S."/>
            <person name="Walker R."/>
            <person name="Wylie K."/>
            <person name="Sekhon M."/>
            <person name="Becker M.C."/>
            <person name="O'Laughlin M.D."/>
            <person name="Schaller M.E."/>
            <person name="Fewell G.A."/>
            <person name="Delehaunty K.D."/>
            <person name="Miner T.L."/>
            <person name="Nash W.E."/>
            <person name="Cordes M."/>
            <person name="Du H."/>
            <person name="Sun H."/>
            <person name="Edwards J."/>
            <person name="Bradshaw-Cordum H."/>
            <person name="Ali J."/>
            <person name="Andrews S."/>
            <person name="Isak A."/>
            <person name="Vanbrunt A."/>
            <person name="Nguyen C."/>
            <person name="Du F."/>
            <person name="Lamar B."/>
            <person name="Courtney L."/>
            <person name="Kalicki J."/>
            <person name="Ozersky P."/>
            <person name="Bielicki L."/>
            <person name="Scott K."/>
            <person name="Holmes A."/>
            <person name="Harkins R."/>
            <person name="Harris A."/>
            <person name="Strong C.M."/>
            <person name="Hou S."/>
            <person name="Tomlinson C."/>
            <person name="Dauphin-Kohlberg S."/>
            <person name="Kozlowicz-Reilly A."/>
            <person name="Leonard S."/>
            <person name="Rohlfing T."/>
            <person name="Rock S.M."/>
            <person name="Tin-Wollam A.-M."/>
            <person name="Abbott A."/>
            <person name="Minx P."/>
            <person name="Maupin R."/>
            <person name="Strowmatt C."/>
            <person name="Latreille P."/>
            <person name="Miller N."/>
            <person name="Johnson D."/>
            <person name="Murray J."/>
            <person name="Woessner J.P."/>
            <person name="Wendl M.C."/>
            <person name="Yang S.-P."/>
            <person name="Schultz B.R."/>
            <person name="Wallis J.W."/>
            <person name="Spieth J."/>
            <person name="Bieri T.A."/>
            <person name="Nelson J.O."/>
            <person name="Berkowicz N."/>
            <person name="Wohldmann P.E."/>
            <person name="Cook L.L."/>
            <person name="Hickenbotham M.T."/>
            <person name="Eldred J."/>
            <person name="Williams D."/>
            <person name="Bedell J.A."/>
            <person name="Mardis E.R."/>
            <person name="Clifton S.W."/>
            <person name="Chissoe S.L."/>
            <person name="Marra M.A."/>
            <person name="Raymond C."/>
            <person name="Haugen E."/>
            <person name="Gillett W."/>
            <person name="Zhou Y."/>
            <person name="James R."/>
            <person name="Phelps K."/>
            <person name="Iadanoto S."/>
            <person name="Bubb K."/>
            <person name="Simms E."/>
            <person name="Levy R."/>
            <person name="Clendenning J."/>
            <person name="Kaul R."/>
            <person name="Kent W.J."/>
            <person name="Furey T.S."/>
            <person name="Baertsch R.A."/>
            <person name="Brent M.R."/>
            <person name="Keibler E."/>
            <person name="Flicek P."/>
            <person name="Bork P."/>
            <person name="Suyama M."/>
            <person name="Bailey J.A."/>
            <person name="Portnoy M.E."/>
            <person name="Torrents D."/>
            <person name="Chinwalla A.T."/>
            <person name="Gish W.R."/>
            <person name="Eddy S.R."/>
            <person name="McPherson J.D."/>
            <person name="Olson M.V."/>
            <person name="Eichler E.E."/>
            <person name="Green E.D."/>
            <person name="Waterston R.H."/>
            <person name="Wilson R.K."/>
        </authorList>
    </citation>
    <scope>NUCLEOTIDE SEQUENCE [LARGE SCALE GENOMIC DNA]</scope>
</reference>
<reference key="3">
    <citation type="submission" date="2005-07" db="EMBL/GenBank/DDBJ databases">
        <authorList>
            <person name="Mural R.J."/>
            <person name="Istrail S."/>
            <person name="Sutton G.G."/>
            <person name="Florea L."/>
            <person name="Halpern A.L."/>
            <person name="Mobarry C.M."/>
            <person name="Lippert R."/>
            <person name="Walenz B."/>
            <person name="Shatkay H."/>
            <person name="Dew I."/>
            <person name="Miller J.R."/>
            <person name="Flanigan M.J."/>
            <person name="Edwards N.J."/>
            <person name="Bolanos R."/>
            <person name="Fasulo D."/>
            <person name="Halldorsson B.V."/>
            <person name="Hannenhalli S."/>
            <person name="Turner R."/>
            <person name="Yooseph S."/>
            <person name="Lu F."/>
            <person name="Nusskern D.R."/>
            <person name="Shue B.C."/>
            <person name="Zheng X.H."/>
            <person name="Zhong F."/>
            <person name="Delcher A.L."/>
            <person name="Huson D.H."/>
            <person name="Kravitz S.A."/>
            <person name="Mouchard L."/>
            <person name="Reinert K."/>
            <person name="Remington K.A."/>
            <person name="Clark A.G."/>
            <person name="Waterman M.S."/>
            <person name="Eichler E.E."/>
            <person name="Adams M.D."/>
            <person name="Hunkapiller M.W."/>
            <person name="Myers E.W."/>
            <person name="Venter J.C."/>
        </authorList>
    </citation>
    <scope>NUCLEOTIDE SEQUENCE [LARGE SCALE GENOMIC DNA]</scope>
</reference>
<reference key="4">
    <citation type="journal article" date="2004" name="Genome Res.">
        <title>The status, quality, and expansion of the NIH full-length cDNA project: the Mammalian Gene Collection (MGC).</title>
        <authorList>
            <consortium name="The MGC Project Team"/>
        </authorList>
    </citation>
    <scope>NUCLEOTIDE SEQUENCE [LARGE SCALE MRNA] (ISOFORM 1)</scope>
    <source>
        <tissue>Brain</tissue>
        <tissue>Lung</tissue>
    </source>
</reference>
<reference key="5">
    <citation type="journal article" date="2001" name="Genome Res.">
        <title>Towards a catalog of human genes and proteins: sequencing and analysis of 500 novel complete protein coding human cDNAs.</title>
        <authorList>
            <person name="Wiemann S."/>
            <person name="Weil B."/>
            <person name="Wellenreuther R."/>
            <person name="Gassenhuber J."/>
            <person name="Glassl S."/>
            <person name="Ansorge W."/>
            <person name="Boecher M."/>
            <person name="Bloecker H."/>
            <person name="Bauersachs S."/>
            <person name="Blum H."/>
            <person name="Lauber J."/>
            <person name="Duesterhoeft A."/>
            <person name="Beyer A."/>
            <person name="Koehrer K."/>
            <person name="Strack N."/>
            <person name="Mewes H.-W."/>
            <person name="Ottenwaelder B."/>
            <person name="Obermaier B."/>
            <person name="Tampe J."/>
            <person name="Heubner D."/>
            <person name="Wambutt R."/>
            <person name="Korn B."/>
            <person name="Klein M."/>
            <person name="Poustka A."/>
        </authorList>
    </citation>
    <scope>NUCLEOTIDE SEQUENCE [LARGE SCALE MRNA] OF 464-875 (ISOFORM 1)</scope>
    <source>
        <tissue>Testis</tissue>
    </source>
</reference>
<reference key="6">
    <citation type="journal article" date="2006" name="Nat. Biotechnol.">
        <title>A probability-based approach for high-throughput protein phosphorylation analysis and site localization.</title>
        <authorList>
            <person name="Beausoleil S.A."/>
            <person name="Villen J."/>
            <person name="Gerber S.A."/>
            <person name="Rush J."/>
            <person name="Gygi S.P."/>
        </authorList>
    </citation>
    <scope>IDENTIFICATION BY MASS SPECTROMETRY [LARGE SCALE ANALYSIS]</scope>
    <source>
        <tissue>Cervix carcinoma</tissue>
    </source>
</reference>
<reference key="7">
    <citation type="journal article" date="2008" name="Proc. Natl. Acad. Sci. U.S.A.">
        <title>A quantitative atlas of mitotic phosphorylation.</title>
        <authorList>
            <person name="Dephoure N."/>
            <person name="Zhou C."/>
            <person name="Villen J."/>
            <person name="Beausoleil S.A."/>
            <person name="Bakalarski C.E."/>
            <person name="Elledge S.J."/>
            <person name="Gygi S.P."/>
        </authorList>
    </citation>
    <scope>PHOSPHORYLATION [LARGE SCALE ANALYSIS] AT SER-766</scope>
    <scope>IDENTIFICATION BY MASS SPECTROMETRY [LARGE SCALE ANALYSIS]</scope>
    <source>
        <tissue>Cervix carcinoma</tissue>
    </source>
</reference>
<reference key="8">
    <citation type="journal article" date="2009" name="Anal. Chem.">
        <title>Lys-N and trypsin cover complementary parts of the phosphoproteome in a refined SCX-based approach.</title>
        <authorList>
            <person name="Gauci S."/>
            <person name="Helbig A.O."/>
            <person name="Slijper M."/>
            <person name="Krijgsveld J."/>
            <person name="Heck A.J."/>
            <person name="Mohammed S."/>
        </authorList>
    </citation>
    <scope>IDENTIFICATION BY MASS SPECTROMETRY [LARGE SCALE ANALYSIS]</scope>
</reference>
<reference key="9">
    <citation type="journal article" date="2009" name="Sci. Signal.">
        <title>Quantitative phosphoproteomic analysis of T cell receptor signaling reveals system-wide modulation of protein-protein interactions.</title>
        <authorList>
            <person name="Mayya V."/>
            <person name="Lundgren D.H."/>
            <person name="Hwang S.-I."/>
            <person name="Rezaul K."/>
            <person name="Wu L."/>
            <person name="Eng J.K."/>
            <person name="Rodionov V."/>
            <person name="Han D.K."/>
        </authorList>
    </citation>
    <scope>PHOSPHORYLATION [LARGE SCALE ANALYSIS] AT SER-766</scope>
    <scope>IDENTIFICATION BY MASS SPECTROMETRY [LARGE SCALE ANALYSIS]</scope>
    <source>
        <tissue>Leukemic T-cell</tissue>
    </source>
</reference>
<reference key="10">
    <citation type="journal article" date="2010" name="Sci. Signal.">
        <title>Quantitative phosphoproteomics reveals widespread full phosphorylation site occupancy during mitosis.</title>
        <authorList>
            <person name="Olsen J.V."/>
            <person name="Vermeulen M."/>
            <person name="Santamaria A."/>
            <person name="Kumar C."/>
            <person name="Miller M.L."/>
            <person name="Jensen L.J."/>
            <person name="Gnad F."/>
            <person name="Cox J."/>
            <person name="Jensen T.S."/>
            <person name="Nigg E.A."/>
            <person name="Brunak S."/>
            <person name="Mann M."/>
        </authorList>
    </citation>
    <scope>PHOSPHORYLATION [LARGE SCALE ANALYSIS] AT SER-766</scope>
    <scope>IDENTIFICATION BY MASS SPECTROMETRY [LARGE SCALE ANALYSIS]</scope>
    <source>
        <tissue>Cervix carcinoma</tissue>
    </source>
</reference>
<reference key="11">
    <citation type="journal article" date="2011" name="BMC Syst. Biol.">
        <title>Initial characterization of the human central proteome.</title>
        <authorList>
            <person name="Burkard T.R."/>
            <person name="Planyavsky M."/>
            <person name="Kaupe I."/>
            <person name="Breitwieser F.P."/>
            <person name="Buerckstuemmer T."/>
            <person name="Bennett K.L."/>
            <person name="Superti-Furga G."/>
            <person name="Colinge J."/>
        </authorList>
    </citation>
    <scope>IDENTIFICATION BY MASS SPECTROMETRY [LARGE SCALE ANALYSIS]</scope>
</reference>
<reference key="12">
    <citation type="journal article" date="2011" name="Sci. Signal.">
        <title>System-wide temporal characterization of the proteome and phosphoproteome of human embryonic stem cell differentiation.</title>
        <authorList>
            <person name="Rigbolt K.T."/>
            <person name="Prokhorova T.A."/>
            <person name="Akimov V."/>
            <person name="Henningsen J."/>
            <person name="Johansen P.T."/>
            <person name="Kratchmarova I."/>
            <person name="Kassem M."/>
            <person name="Mann M."/>
            <person name="Olsen J.V."/>
            <person name="Blagoev B."/>
        </authorList>
    </citation>
    <scope>PHOSPHORYLATION [LARGE SCALE ANALYSIS] AT SER-766</scope>
    <scope>IDENTIFICATION BY MASS SPECTROMETRY [LARGE SCALE ANALYSIS]</scope>
</reference>
<reference key="13">
    <citation type="journal article" date="2013" name="J. Proteome Res.">
        <title>Toward a comprehensive characterization of a human cancer cell phosphoproteome.</title>
        <authorList>
            <person name="Zhou H."/>
            <person name="Di Palma S."/>
            <person name="Preisinger C."/>
            <person name="Peng M."/>
            <person name="Polat A.N."/>
            <person name="Heck A.J."/>
            <person name="Mohammed S."/>
        </authorList>
    </citation>
    <scope>PHOSPHORYLATION [LARGE SCALE ANALYSIS] AT SER-759 AND SER-766</scope>
    <scope>IDENTIFICATION BY MASS SPECTROMETRY [LARGE SCALE ANALYSIS]</scope>
    <source>
        <tissue>Cervix carcinoma</tissue>
        <tissue>Erythroleukemia</tissue>
    </source>
</reference>
<reference key="14">
    <citation type="journal article" date="2013" name="Science">
        <title>A Tumor suppressor complex with GAP activity for the Rag GTPases that signal amino acid sufficiency to mTORC1.</title>
        <authorList>
            <person name="Bar-Peled L."/>
            <person name="Chantranupong L."/>
            <person name="Cherniack A.D."/>
            <person name="Chen W.W."/>
            <person name="Ottina K.A."/>
            <person name="Grabiner B.C."/>
            <person name="Spear E.D."/>
            <person name="Carter S.L."/>
            <person name="Meyerson M."/>
            <person name="Sabatini D.M."/>
        </authorList>
    </citation>
    <scope>FUNCTION</scope>
    <scope>IDENTIFICATION IN GATOR COMPLEX</scope>
    <scope>SUBUNIT</scope>
</reference>
<reference key="15">
    <citation type="journal article" date="2014" name="Cell Rep.">
        <title>The Sestrins interact with GATOR2 to negatively regulate the amino-acid-sensing pathway upstream of mTORC1.</title>
        <authorList>
            <person name="Chantranupong L."/>
            <person name="Wolfson R.L."/>
            <person name="Orozco J.M."/>
            <person name="Saxton R.A."/>
            <person name="Scaria S.M."/>
            <person name="Bar-Peled L."/>
            <person name="Spooner E."/>
            <person name="Isasa M."/>
            <person name="Gygi S.P."/>
            <person name="Sabatini D.M."/>
        </authorList>
    </citation>
    <scope>FUNCTION</scope>
    <scope>ACTIVITY REGULATION</scope>
    <scope>INTERACTION WITH SESN1; SESN2 AND SESN3</scope>
</reference>
<reference key="16">
    <citation type="journal article" date="2014" name="Cell Rep.">
        <title>Sestrins inhibit mTORC1 kinase activation through the GATOR complex.</title>
        <authorList>
            <person name="Parmigiani A."/>
            <person name="Nourbakhsh A."/>
            <person name="Ding B."/>
            <person name="Wang W."/>
            <person name="Kim Y.C."/>
            <person name="Akopiants K."/>
            <person name="Guan K.L."/>
            <person name="Karin M."/>
            <person name="Budanov A.V."/>
        </authorList>
    </citation>
    <scope>FUNCTION</scope>
</reference>
<reference key="17">
    <citation type="journal article" date="2016" name="Cell">
        <title>The CASTOR proteins are arginine sensors for the mTORC1 pathway.</title>
        <authorList>
            <person name="Chantranupong L."/>
            <person name="Scaria S.M."/>
            <person name="Saxton R.A."/>
            <person name="Gygi M.P."/>
            <person name="Shen K."/>
            <person name="Wyant G.A."/>
            <person name="Wang T."/>
            <person name="Harper J.W."/>
            <person name="Gygi S.P."/>
            <person name="Sabatini D.M."/>
        </authorList>
    </citation>
    <scope>ACTIVITY REGULATION</scope>
    <scope>INTERACTION WITH CASTOR2 AND CASTOR1</scope>
</reference>
<reference key="18">
    <citation type="journal article" date="2016" name="Science">
        <title>Structural basis for leucine sensing by the Sestrin2-mTORC1 pathway.</title>
        <authorList>
            <person name="Saxton R.A."/>
            <person name="Knockenhauer K.E."/>
            <person name="Wolfson R.L."/>
            <person name="Chantranupong L."/>
            <person name="Pacold M.E."/>
            <person name="Wang T."/>
            <person name="Schwartz T.U."/>
            <person name="Sabatini D.M."/>
        </authorList>
    </citation>
    <scope>FUNCTION</scope>
    <scope>ACTIVITY REGULATION</scope>
    <scope>INTERACTION WITH SESN2</scope>
</reference>
<reference key="19">
    <citation type="journal article" date="2016" name="Nature">
        <title>Mechanism of arginine sensing by CASTOR1 upstream of mTORC1.</title>
        <authorList>
            <person name="Saxton R.A."/>
            <person name="Chantranupong L."/>
            <person name="Knockenhauer K.E."/>
            <person name="Schwartz T.U."/>
            <person name="Sabatini D.M."/>
        </authorList>
    </citation>
    <scope>FUNCTION</scope>
    <scope>ACTIVITY REGULATION</scope>
</reference>
<reference key="20">
    <citation type="journal article" date="2017" name="Nature">
        <title>KICSTOR recruits GATOR1 to the lysosome and is necessary for nutrients to regulate mTORC1.</title>
        <authorList>
            <person name="Wolfson R.L."/>
            <person name="Chantranupong L."/>
            <person name="Wyant G.A."/>
            <person name="Gu X."/>
            <person name="Orozco J.M."/>
            <person name="Shen K."/>
            <person name="Condon K.J."/>
            <person name="Petri S."/>
            <person name="Kedir J."/>
            <person name="Scaria S.M."/>
            <person name="Abu-Remaileh M."/>
            <person name="Frankel W.N."/>
            <person name="Sabatini D.M."/>
        </authorList>
    </citation>
    <scope>SUBCELLULAR LOCATION</scope>
</reference>
<reference key="21">
    <citation type="journal article" date="2021" name="Nature">
        <title>SAR1B senses leucine levels to regulate mTORC1 signalling.</title>
        <authorList>
            <person name="Chen J."/>
            <person name="Ou Y."/>
            <person name="Luo R."/>
            <person name="Wang J."/>
            <person name="Wang D."/>
            <person name="Guan J."/>
            <person name="Li Y."/>
            <person name="Xia P."/>
            <person name="Chen P.R."/>
            <person name="Liu Y."/>
        </authorList>
    </citation>
    <scope>INTERACTION WITH SAR1B</scope>
</reference>
<reference key="22">
    <citation type="journal article" date="2023" name="Mol. Cell">
        <title>Ring domains are essential for GATOR2-dependent mTORC1 activation.</title>
        <authorList>
            <person name="Jiang C."/>
            <person name="Dai X."/>
            <person name="He S."/>
            <person name="Zhou H."/>
            <person name="Fang L."/>
            <person name="Guo J."/>
            <person name="Liu S."/>
            <person name="Zhang T."/>
            <person name="Pan W."/>
            <person name="Yu H."/>
            <person name="Fu T."/>
            <person name="Li D."/>
            <person name="Inuzuka H."/>
            <person name="Wang P."/>
            <person name="Xiao J."/>
            <person name="Wei W."/>
        </authorList>
    </citation>
    <scope>FUNCTION</scope>
    <scope>IDENTIFICATION IN GATOR2 COMPLEX</scope>
    <scope>MUTAGENESIS OF 785-CYS--CYS-788</scope>
</reference>
<reference evidence="18" key="23">
    <citation type="journal article" date="2022" name="Nature">
        <title>Structure of the nutrient-sensing hub GATOR2.</title>
        <authorList>
            <person name="Valenstein M.L."/>
            <person name="Rogala K.B."/>
            <person name="Lalgudi P.V."/>
            <person name="Brignole E.J."/>
            <person name="Gu X."/>
            <person name="Saxton R.A."/>
            <person name="Chantranupong L."/>
            <person name="Kolibius J."/>
            <person name="Quast J.P."/>
            <person name="Sabatini D.M."/>
        </authorList>
    </citation>
    <scope>STRUCTURE BY ELECTRON MICROSCOPY (3.66 ANGSTROMS) IN COMPLEX WITH WDR24; WDR59; SEC13 AND SEH1L</scope>
    <scope>FUNCTION</scope>
    <scope>ACTIVITY REGULATION</scope>
    <scope>IDENTIFICATION IN GATOR2 COMPLEX</scope>
    <scope>INTERACTION WITH CASTOR1</scope>
    <scope>MUTAGENESIS OF ALA-560</scope>
</reference>
<sequence length="875" mass="98584">MSGTKPDILWAPHHVDRFVVCDSELSLYHVESTVNSELKAGSLRLSEDSAATLLSINSDTPYMKCVAWYLNYDPECLLAVGQANGRVVLTSLGQDHNSKFKDLIGKEFVPKHARQCNTLAWNPLDSNWLAAGLDKHRADFSVLIWDICSKYTPDIVPMEKVKLSAGETETTLLVTKPLYELGQNDACLSLCWLPRDQKLLLAGMHRNLAIFDLRNTSQKMFVNTKAVQGVTVDPYFHDRVASFYEGQVAIWDLRKFEKPVLTLTEQPKPLTKVAWCPTRTGLLATLTRDSNIIRLYDMQHTPTPIGDETEPTIIERSVQPCDNYIASFAWHPTSQNRMIVVTPNRTMSDFTVFERISLAWSPITSLMWACGRHLYECTEEENDNSLEKDIATKMRLRALSRYGLDTEQVWRNHILAGNEDPQLKSLWYTLHFMKQYTEDMDQKSPGNKGSLVYAGIKSIVKSSLGMVESSRHNWSGLDKQSDIQNLNEERILALQLCGWIKKGTDVDVGPFLNSLVQEGEWERAAAVALFNLDIRRAIQILNEGASSEKGDLNLNVVAMALSGYTDEKNSLWREMCSTLRLQLNNPYLCVMFAFLTSETGSYDGVLYENKVAVRDRVAFACKFLSDTQLNRYIEKLTNEMKEAGNLEGILLTGLTKDGVDLMESYVDRTGDVQTASYCMLQGSPLDVLKDERVQYWIENYRNLLDAWRFWHKRAEFDIHRSKLDPSSKPLAQVFVSCNFCGKSISYSCSAVPHQGRGFSQYGVSGSPTKSKVTSCPGCRKPLPRCALCLINMGTPVSSCPGGTKSDEKVDLSKDKKLAQFNNWFTWCHNCRHGGHAGHMLSWFRDHAECPVSACTCKCMQLDTTGNLVPAETVQP</sequence>
<keyword id="KW-0002">3D-structure</keyword>
<keyword id="KW-0025">Alternative splicing</keyword>
<keyword id="KW-0458">Lysosome</keyword>
<keyword id="KW-0472">Membrane</keyword>
<keyword id="KW-0479">Metal-binding</keyword>
<keyword id="KW-0597">Phosphoprotein</keyword>
<keyword id="KW-1267">Proteomics identification</keyword>
<keyword id="KW-1185">Reference proteome</keyword>
<keyword id="KW-0677">Repeat</keyword>
<keyword id="KW-0853">WD repeat</keyword>
<keyword id="KW-0862">Zinc</keyword>
<keyword id="KW-0863">Zinc-finger</keyword>